<gene>
    <name evidence="1" type="primary">dapD</name>
    <name type="ordered locus">NE2462</name>
</gene>
<protein>
    <recommendedName>
        <fullName evidence="1">2,3,4,5-tetrahydropyridine-2,6-dicarboxylate N-succinyltransferase</fullName>
        <ecNumber evidence="1">2.3.1.117</ecNumber>
    </recommendedName>
    <alternativeName>
        <fullName evidence="1">Tetrahydrodipicolinate N-succinyltransferase</fullName>
        <shortName evidence="1">THDP succinyltransferase</shortName>
        <shortName evidence="1">THP succinyltransferase</shortName>
        <shortName evidence="1">Tetrahydropicolinate succinylase</shortName>
    </alternativeName>
</protein>
<comment type="catalytic activity">
    <reaction evidence="1">
        <text>(S)-2,3,4,5-tetrahydrodipicolinate + succinyl-CoA + H2O = (S)-2-succinylamino-6-oxoheptanedioate + CoA</text>
        <dbReference type="Rhea" id="RHEA:17325"/>
        <dbReference type="ChEBI" id="CHEBI:15377"/>
        <dbReference type="ChEBI" id="CHEBI:15685"/>
        <dbReference type="ChEBI" id="CHEBI:16845"/>
        <dbReference type="ChEBI" id="CHEBI:57287"/>
        <dbReference type="ChEBI" id="CHEBI:57292"/>
        <dbReference type="EC" id="2.3.1.117"/>
    </reaction>
</comment>
<comment type="pathway">
    <text evidence="1">Amino-acid biosynthesis; L-lysine biosynthesis via DAP pathway; LL-2,6-diaminopimelate from (S)-tetrahydrodipicolinate (succinylase route): step 1/3.</text>
</comment>
<comment type="subunit">
    <text evidence="1">Homotrimer.</text>
</comment>
<comment type="subcellular location">
    <subcellularLocation>
        <location evidence="1">Cytoplasm</location>
    </subcellularLocation>
</comment>
<comment type="similarity">
    <text evidence="1">Belongs to the transferase hexapeptide repeat family.</text>
</comment>
<evidence type="ECO:0000255" key="1">
    <source>
        <dbReference type="HAMAP-Rule" id="MF_00811"/>
    </source>
</evidence>
<name>DAPD_NITEU</name>
<keyword id="KW-0012">Acyltransferase</keyword>
<keyword id="KW-0028">Amino-acid biosynthesis</keyword>
<keyword id="KW-0963">Cytoplasm</keyword>
<keyword id="KW-0220">Diaminopimelate biosynthesis</keyword>
<keyword id="KW-0457">Lysine biosynthesis</keyword>
<keyword id="KW-1185">Reference proteome</keyword>
<keyword id="KW-0677">Repeat</keyword>
<keyword id="KW-0808">Transferase</keyword>
<feature type="chain" id="PRO_0000196953" description="2,3,4,5-tetrahydropyridine-2,6-dicarboxylate N-succinyltransferase">
    <location>
        <begin position="1"/>
        <end position="273"/>
    </location>
</feature>
<feature type="binding site" evidence="1">
    <location>
        <position position="104"/>
    </location>
    <ligand>
        <name>substrate</name>
    </ligand>
</feature>
<feature type="binding site" evidence="1">
    <location>
        <position position="141"/>
    </location>
    <ligand>
        <name>substrate</name>
    </ligand>
</feature>
<accession>Q82S90</accession>
<dbReference type="EC" id="2.3.1.117" evidence="1"/>
<dbReference type="EMBL" id="AL954747">
    <property type="protein sequence ID" value="CAD86374.1"/>
    <property type="molecule type" value="Genomic_DNA"/>
</dbReference>
<dbReference type="RefSeq" id="WP_011112925.1">
    <property type="nucleotide sequence ID" value="NC_004757.1"/>
</dbReference>
<dbReference type="SMR" id="Q82S90"/>
<dbReference type="STRING" id="228410.NE2462"/>
<dbReference type="GeneID" id="87105591"/>
<dbReference type="KEGG" id="neu:NE2462"/>
<dbReference type="eggNOG" id="COG2171">
    <property type="taxonomic scope" value="Bacteria"/>
</dbReference>
<dbReference type="HOGENOM" id="CLU_050859_0_1_4"/>
<dbReference type="OrthoDB" id="9775362at2"/>
<dbReference type="PhylomeDB" id="Q82S90"/>
<dbReference type="UniPathway" id="UPA00034">
    <property type="reaction ID" value="UER00019"/>
</dbReference>
<dbReference type="Proteomes" id="UP000001416">
    <property type="component" value="Chromosome"/>
</dbReference>
<dbReference type="GO" id="GO:0005737">
    <property type="term" value="C:cytoplasm"/>
    <property type="evidence" value="ECO:0007669"/>
    <property type="project" value="UniProtKB-SubCell"/>
</dbReference>
<dbReference type="GO" id="GO:0008666">
    <property type="term" value="F:2,3,4,5-tetrahydropyridine-2,6-dicarboxylate N-succinyltransferase activity"/>
    <property type="evidence" value="ECO:0007669"/>
    <property type="project" value="UniProtKB-UniRule"/>
</dbReference>
<dbReference type="GO" id="GO:0016779">
    <property type="term" value="F:nucleotidyltransferase activity"/>
    <property type="evidence" value="ECO:0007669"/>
    <property type="project" value="TreeGrafter"/>
</dbReference>
<dbReference type="GO" id="GO:0019877">
    <property type="term" value="P:diaminopimelate biosynthetic process"/>
    <property type="evidence" value="ECO:0007669"/>
    <property type="project" value="UniProtKB-UniRule"/>
</dbReference>
<dbReference type="GO" id="GO:0009089">
    <property type="term" value="P:lysine biosynthetic process via diaminopimelate"/>
    <property type="evidence" value="ECO:0007669"/>
    <property type="project" value="UniProtKB-UniRule"/>
</dbReference>
<dbReference type="CDD" id="cd03350">
    <property type="entry name" value="LbH_THP_succinylT"/>
    <property type="match status" value="1"/>
</dbReference>
<dbReference type="Gene3D" id="2.160.10.10">
    <property type="entry name" value="Hexapeptide repeat proteins"/>
    <property type="match status" value="1"/>
</dbReference>
<dbReference type="Gene3D" id="1.10.166.10">
    <property type="entry name" value="Tetrahydrodipicolinate-N-succinyltransferase, N-terminal domain"/>
    <property type="match status" value="1"/>
</dbReference>
<dbReference type="HAMAP" id="MF_00811">
    <property type="entry name" value="DapD"/>
    <property type="match status" value="1"/>
</dbReference>
<dbReference type="InterPro" id="IPR005664">
    <property type="entry name" value="DapD_Trfase_Hexpep_rpt_fam"/>
</dbReference>
<dbReference type="InterPro" id="IPR001451">
    <property type="entry name" value="Hexapep"/>
</dbReference>
<dbReference type="InterPro" id="IPR018357">
    <property type="entry name" value="Hexapep_transf_CS"/>
</dbReference>
<dbReference type="InterPro" id="IPR023180">
    <property type="entry name" value="THP_succinylTrfase_dom1"/>
</dbReference>
<dbReference type="InterPro" id="IPR037133">
    <property type="entry name" value="THP_succinylTrfase_N_sf"/>
</dbReference>
<dbReference type="InterPro" id="IPR011004">
    <property type="entry name" value="Trimer_LpxA-like_sf"/>
</dbReference>
<dbReference type="NCBIfam" id="TIGR00965">
    <property type="entry name" value="dapD"/>
    <property type="match status" value="1"/>
</dbReference>
<dbReference type="NCBIfam" id="NF008808">
    <property type="entry name" value="PRK11830.1"/>
    <property type="match status" value="1"/>
</dbReference>
<dbReference type="PANTHER" id="PTHR19136:SF52">
    <property type="entry name" value="2,3,4,5-TETRAHYDROPYRIDINE-2,6-DICARBOXYLATE N-SUCCINYLTRANSFERASE"/>
    <property type="match status" value="1"/>
</dbReference>
<dbReference type="PANTHER" id="PTHR19136">
    <property type="entry name" value="MOLYBDENUM COFACTOR GUANYLYLTRANSFERASE"/>
    <property type="match status" value="1"/>
</dbReference>
<dbReference type="Pfam" id="PF14602">
    <property type="entry name" value="Hexapep_2"/>
    <property type="match status" value="1"/>
</dbReference>
<dbReference type="Pfam" id="PF14805">
    <property type="entry name" value="THDPS_N_2"/>
    <property type="match status" value="1"/>
</dbReference>
<dbReference type="SUPFAM" id="SSF51161">
    <property type="entry name" value="Trimeric LpxA-like enzymes"/>
    <property type="match status" value="1"/>
</dbReference>
<dbReference type="PROSITE" id="PS00101">
    <property type="entry name" value="HEXAPEP_TRANSFERASES"/>
    <property type="match status" value="1"/>
</dbReference>
<proteinExistence type="inferred from homology"/>
<reference key="1">
    <citation type="journal article" date="2003" name="J. Bacteriol.">
        <title>Complete genome sequence of the ammonia-oxidizing bacterium and obligate chemolithoautotroph Nitrosomonas europaea.</title>
        <authorList>
            <person name="Chain P."/>
            <person name="Lamerdin J.E."/>
            <person name="Larimer F.W."/>
            <person name="Regala W."/>
            <person name="Lao V."/>
            <person name="Land M.L."/>
            <person name="Hauser L."/>
            <person name="Hooper A.B."/>
            <person name="Klotz M.G."/>
            <person name="Norton J."/>
            <person name="Sayavedra-Soto L.A."/>
            <person name="Arciero D.M."/>
            <person name="Hommes N.G."/>
            <person name="Whittaker M.M."/>
            <person name="Arp D.J."/>
        </authorList>
    </citation>
    <scope>NUCLEOTIDE SEQUENCE [LARGE SCALE GENOMIC DNA]</scope>
    <source>
        <strain>ATCC 19718 / CIP 103999 / KCTC 2705 / NBRC 14298</strain>
    </source>
</reference>
<sequence length="273" mass="29685">MEQLQAVIENAFERRAEITPRNVEANLKESVAQVINMLDTGKLRVAEKINGEWVVHQWIKKAVLLSFRMEDNSFIKGGFSNYFDKIPSKFADYSSRDFRDGGFRVVPPAAVRKGSFIASNVVLMPSYVNIGAYVDEGTMVDTWATVGSCAQIGKNVHLSGGVGIGGVLEPVQASPTIIEDNCFIGARSEIVEGVVVGENSVISMGVYIGQSTKIYNRETGEITYGRIPPGSVVVSGNLPAENGRYSLYCAVIVKQVDAKTRSKTGINELLRGI</sequence>
<organism>
    <name type="scientific">Nitrosomonas europaea (strain ATCC 19718 / CIP 103999 / KCTC 2705 / NBRC 14298)</name>
    <dbReference type="NCBI Taxonomy" id="228410"/>
    <lineage>
        <taxon>Bacteria</taxon>
        <taxon>Pseudomonadati</taxon>
        <taxon>Pseudomonadota</taxon>
        <taxon>Betaproteobacteria</taxon>
        <taxon>Nitrosomonadales</taxon>
        <taxon>Nitrosomonadaceae</taxon>
        <taxon>Nitrosomonas</taxon>
    </lineage>
</organism>